<comment type="subunit">
    <text evidence="1">Forms oligomers.</text>
</comment>
<comment type="subcellular location">
    <subcellularLocation>
        <location evidence="1">Cytoplasm</location>
        <location evidence="1">Nucleoid</location>
    </subcellularLocation>
</comment>
<comment type="similarity">
    <text evidence="1">Belongs to the MraZ family.</text>
</comment>
<name>MRAZ_SHOC1</name>
<reference key="1">
    <citation type="submission" date="2003-10" db="EMBL/GenBank/DDBJ databases">
        <title>The complete genome sequence of the alkaliphilic Bacillus clausii KSM-K16.</title>
        <authorList>
            <person name="Takaki Y."/>
            <person name="Kageyama Y."/>
            <person name="Shimamura S."/>
            <person name="Suzuki H."/>
            <person name="Nishi S."/>
            <person name="Hatada Y."/>
            <person name="Kawai S."/>
            <person name="Ito S."/>
            <person name="Horikoshi K."/>
        </authorList>
    </citation>
    <scope>NUCLEOTIDE SEQUENCE [LARGE SCALE GENOMIC DNA]</scope>
    <source>
        <strain>KSM-K16</strain>
    </source>
</reference>
<dbReference type="EMBL" id="AP006627">
    <property type="protein sequence ID" value="BAD64900.1"/>
    <property type="molecule type" value="Genomic_DNA"/>
</dbReference>
<dbReference type="RefSeq" id="WP_011247208.1">
    <property type="nucleotide sequence ID" value="NC_006582.1"/>
</dbReference>
<dbReference type="SMR" id="Q5WFG0"/>
<dbReference type="STRING" id="66692.ABC2365"/>
<dbReference type="GeneID" id="86926529"/>
<dbReference type="KEGG" id="bcl:ABC2365"/>
<dbReference type="eggNOG" id="COG2001">
    <property type="taxonomic scope" value="Bacteria"/>
</dbReference>
<dbReference type="HOGENOM" id="CLU_107907_0_5_9"/>
<dbReference type="OrthoDB" id="9807753at2"/>
<dbReference type="Proteomes" id="UP000001168">
    <property type="component" value="Chromosome"/>
</dbReference>
<dbReference type="GO" id="GO:0005737">
    <property type="term" value="C:cytoplasm"/>
    <property type="evidence" value="ECO:0007669"/>
    <property type="project" value="UniProtKB-UniRule"/>
</dbReference>
<dbReference type="GO" id="GO:0009295">
    <property type="term" value="C:nucleoid"/>
    <property type="evidence" value="ECO:0007669"/>
    <property type="project" value="UniProtKB-SubCell"/>
</dbReference>
<dbReference type="GO" id="GO:0003700">
    <property type="term" value="F:DNA-binding transcription factor activity"/>
    <property type="evidence" value="ECO:0007669"/>
    <property type="project" value="UniProtKB-UniRule"/>
</dbReference>
<dbReference type="GO" id="GO:0000976">
    <property type="term" value="F:transcription cis-regulatory region binding"/>
    <property type="evidence" value="ECO:0007669"/>
    <property type="project" value="TreeGrafter"/>
</dbReference>
<dbReference type="GO" id="GO:2000143">
    <property type="term" value="P:negative regulation of DNA-templated transcription initiation"/>
    <property type="evidence" value="ECO:0007669"/>
    <property type="project" value="TreeGrafter"/>
</dbReference>
<dbReference type="CDD" id="cd16321">
    <property type="entry name" value="MraZ_C"/>
    <property type="match status" value="1"/>
</dbReference>
<dbReference type="CDD" id="cd16320">
    <property type="entry name" value="MraZ_N"/>
    <property type="match status" value="1"/>
</dbReference>
<dbReference type="FunFam" id="3.40.1550.20:FF:000002">
    <property type="entry name" value="Transcriptional regulator MraZ"/>
    <property type="match status" value="1"/>
</dbReference>
<dbReference type="Gene3D" id="3.40.1550.20">
    <property type="entry name" value="Transcriptional regulator MraZ domain"/>
    <property type="match status" value="1"/>
</dbReference>
<dbReference type="HAMAP" id="MF_01008">
    <property type="entry name" value="MraZ"/>
    <property type="match status" value="1"/>
</dbReference>
<dbReference type="InterPro" id="IPR003444">
    <property type="entry name" value="MraZ"/>
</dbReference>
<dbReference type="InterPro" id="IPR035644">
    <property type="entry name" value="MraZ_C"/>
</dbReference>
<dbReference type="InterPro" id="IPR020603">
    <property type="entry name" value="MraZ_dom"/>
</dbReference>
<dbReference type="InterPro" id="IPR035642">
    <property type="entry name" value="MraZ_N"/>
</dbReference>
<dbReference type="InterPro" id="IPR038619">
    <property type="entry name" value="MraZ_sf"/>
</dbReference>
<dbReference type="InterPro" id="IPR007159">
    <property type="entry name" value="SpoVT-AbrB_dom"/>
</dbReference>
<dbReference type="InterPro" id="IPR037914">
    <property type="entry name" value="SpoVT-AbrB_sf"/>
</dbReference>
<dbReference type="NCBIfam" id="TIGR00242">
    <property type="entry name" value="division/cell wall cluster transcriptional repressor MraZ"/>
    <property type="match status" value="1"/>
</dbReference>
<dbReference type="PANTHER" id="PTHR34701">
    <property type="entry name" value="TRANSCRIPTIONAL REGULATOR MRAZ"/>
    <property type="match status" value="1"/>
</dbReference>
<dbReference type="PANTHER" id="PTHR34701:SF1">
    <property type="entry name" value="TRANSCRIPTIONAL REGULATOR MRAZ"/>
    <property type="match status" value="1"/>
</dbReference>
<dbReference type="Pfam" id="PF02381">
    <property type="entry name" value="MraZ"/>
    <property type="match status" value="2"/>
</dbReference>
<dbReference type="SUPFAM" id="SSF89447">
    <property type="entry name" value="AbrB/MazE/MraZ-like"/>
    <property type="match status" value="1"/>
</dbReference>
<dbReference type="PROSITE" id="PS51740">
    <property type="entry name" value="SPOVT_ABRB"/>
    <property type="match status" value="2"/>
</dbReference>
<organism>
    <name type="scientific">Shouchella clausii (strain KSM-K16)</name>
    <name type="common">Alkalihalobacillus clausii</name>
    <dbReference type="NCBI Taxonomy" id="66692"/>
    <lineage>
        <taxon>Bacteria</taxon>
        <taxon>Bacillati</taxon>
        <taxon>Bacillota</taxon>
        <taxon>Bacilli</taxon>
        <taxon>Bacillales</taxon>
        <taxon>Bacillaceae</taxon>
        <taxon>Shouchella</taxon>
    </lineage>
</organism>
<keyword id="KW-0963">Cytoplasm</keyword>
<keyword id="KW-0238">DNA-binding</keyword>
<keyword id="KW-1185">Reference proteome</keyword>
<keyword id="KW-0677">Repeat</keyword>
<keyword id="KW-0804">Transcription</keyword>
<keyword id="KW-0805">Transcription regulation</keyword>
<accession>Q5WFG0</accession>
<feature type="chain" id="PRO_0000108458" description="Transcriptional regulator MraZ">
    <location>
        <begin position="1"/>
        <end position="143"/>
    </location>
</feature>
<feature type="domain" description="SpoVT-AbrB 1" evidence="2">
    <location>
        <begin position="5"/>
        <end position="47"/>
    </location>
</feature>
<feature type="domain" description="SpoVT-AbrB 2" evidence="2">
    <location>
        <begin position="76"/>
        <end position="119"/>
    </location>
</feature>
<gene>
    <name evidence="1" type="primary">mraZ</name>
    <name type="ordered locus">ABC2365</name>
</gene>
<proteinExistence type="inferred from homology"/>
<protein>
    <recommendedName>
        <fullName>Transcriptional regulator MraZ</fullName>
    </recommendedName>
</protein>
<evidence type="ECO:0000255" key="1">
    <source>
        <dbReference type="HAMAP-Rule" id="MF_01008"/>
    </source>
</evidence>
<evidence type="ECO:0000255" key="2">
    <source>
        <dbReference type="PROSITE-ProRule" id="PRU01076"/>
    </source>
</evidence>
<sequence length="143" mass="16741">MFLGEYRHTIDEKGRMIVPAKFREHLGTPFVITRGLDNCLFVYPQSEWDKLESQLKELPFTKKDARAFTRFFFSGASECELDKQGRMNVPQPLREYAKLEKECVVIGVSNRMEVWSKTLWEDYVSQSEDSFADIAENLIDFDL</sequence>